<reference key="1">
    <citation type="journal article" date="2010" name="J. Bacteriol.">
        <title>Genome sequence of the dioxin-mineralizing bacterium Sphingomonas wittichii RW1.</title>
        <authorList>
            <person name="Miller T.R."/>
            <person name="Delcher A.L."/>
            <person name="Salzberg S.L."/>
            <person name="Saunders E."/>
            <person name="Detter J.C."/>
            <person name="Halden R.U."/>
        </authorList>
    </citation>
    <scope>NUCLEOTIDE SEQUENCE [LARGE SCALE GENOMIC DNA]</scope>
    <source>
        <strain>DSM 6014 / CCUG 31198 / JCM 15750 / NBRC 105917 / EY 4224 / RW1</strain>
    </source>
</reference>
<comment type="function">
    <text evidence="2">GTP hydrolase that promotes the GTP-dependent binding of aminoacyl-tRNA to the A-site of ribosomes during protein biosynthesis.</text>
</comment>
<comment type="catalytic activity">
    <reaction evidence="2">
        <text>GTP + H2O = GDP + phosphate + H(+)</text>
        <dbReference type="Rhea" id="RHEA:19669"/>
        <dbReference type="ChEBI" id="CHEBI:15377"/>
        <dbReference type="ChEBI" id="CHEBI:15378"/>
        <dbReference type="ChEBI" id="CHEBI:37565"/>
        <dbReference type="ChEBI" id="CHEBI:43474"/>
        <dbReference type="ChEBI" id="CHEBI:58189"/>
        <dbReference type="EC" id="3.6.5.3"/>
    </reaction>
    <physiologicalReaction direction="left-to-right" evidence="2">
        <dbReference type="Rhea" id="RHEA:19670"/>
    </physiologicalReaction>
</comment>
<comment type="subunit">
    <text evidence="2">Monomer.</text>
</comment>
<comment type="subcellular location">
    <subcellularLocation>
        <location evidence="2">Cytoplasm</location>
    </subcellularLocation>
</comment>
<comment type="similarity">
    <text evidence="2">Belongs to the TRAFAC class translation factor GTPase superfamily. Classic translation factor GTPase family. EF-Tu/EF-1A subfamily.</text>
</comment>
<protein>
    <recommendedName>
        <fullName evidence="2">Elongation factor Tu</fullName>
        <shortName evidence="2">EF-Tu</shortName>
        <ecNumber evidence="2">3.6.5.3</ecNumber>
    </recommendedName>
</protein>
<sequence>MAKAKFERTKPHCNIGTIGHVDHGKTSLTAAITKVLAETGGATFVDYANIDKAPEERERGITISTAHVEYETEQRHYAHVDCPGHADYVKNMITGAAQMDGGILVVSATDGPMPQTREHILLARQVGVPALVVFMNKVDLVDDAEILELVELEVRELLSSYEFPGDDIPVIKGSAVKALDGTNDEIGRNAVLELMAAVDSYIPQPERPLDKPFLMPIEDVFSISGRGTVVTGRVETGMVKVGEEVEIVGIKDTRKTTVTGVEMFRKLLDQGQAGDNIGALIRGVGREEVERGQVLAKPGSIKPHTDFSSEVYVLSKEEGGRHTPFFANYRPQFYFRTTDVTGTVELPEGTEMVMPGDNVKLGVKLIAPIAMEEGLRFSIREGGRTVGAGVVSSISK</sequence>
<gene>
    <name evidence="2" type="primary">tuf</name>
    <name type="ordered locus">Swit_1355</name>
</gene>
<accession>A5V604</accession>
<evidence type="ECO:0000250" key="1"/>
<evidence type="ECO:0000255" key="2">
    <source>
        <dbReference type="HAMAP-Rule" id="MF_00118"/>
    </source>
</evidence>
<dbReference type="EC" id="3.6.5.3" evidence="2"/>
<dbReference type="EMBL" id="CP000699">
    <property type="protein sequence ID" value="ABQ67720.1"/>
    <property type="molecule type" value="Genomic_DNA"/>
</dbReference>
<dbReference type="SMR" id="A5V604"/>
<dbReference type="STRING" id="392499.Swit_1355"/>
<dbReference type="PaxDb" id="392499-Swit_1355"/>
<dbReference type="KEGG" id="swi:Swit_1355"/>
<dbReference type="eggNOG" id="COG0050">
    <property type="taxonomic scope" value="Bacteria"/>
</dbReference>
<dbReference type="HOGENOM" id="CLU_007265_0_1_5"/>
<dbReference type="OrthoDB" id="9804504at2"/>
<dbReference type="Proteomes" id="UP000001989">
    <property type="component" value="Chromosome"/>
</dbReference>
<dbReference type="GO" id="GO:0005829">
    <property type="term" value="C:cytosol"/>
    <property type="evidence" value="ECO:0007669"/>
    <property type="project" value="TreeGrafter"/>
</dbReference>
<dbReference type="GO" id="GO:0005525">
    <property type="term" value="F:GTP binding"/>
    <property type="evidence" value="ECO:0007669"/>
    <property type="project" value="UniProtKB-UniRule"/>
</dbReference>
<dbReference type="GO" id="GO:0003924">
    <property type="term" value="F:GTPase activity"/>
    <property type="evidence" value="ECO:0007669"/>
    <property type="project" value="InterPro"/>
</dbReference>
<dbReference type="GO" id="GO:0097216">
    <property type="term" value="F:guanosine tetraphosphate binding"/>
    <property type="evidence" value="ECO:0007669"/>
    <property type="project" value="UniProtKB-ARBA"/>
</dbReference>
<dbReference type="GO" id="GO:0003746">
    <property type="term" value="F:translation elongation factor activity"/>
    <property type="evidence" value="ECO:0007669"/>
    <property type="project" value="UniProtKB-UniRule"/>
</dbReference>
<dbReference type="CDD" id="cd01884">
    <property type="entry name" value="EF_Tu"/>
    <property type="match status" value="1"/>
</dbReference>
<dbReference type="CDD" id="cd03697">
    <property type="entry name" value="EFTU_II"/>
    <property type="match status" value="1"/>
</dbReference>
<dbReference type="CDD" id="cd03707">
    <property type="entry name" value="EFTU_III"/>
    <property type="match status" value="1"/>
</dbReference>
<dbReference type="FunFam" id="2.40.30.10:FF:000001">
    <property type="entry name" value="Elongation factor Tu"/>
    <property type="match status" value="1"/>
</dbReference>
<dbReference type="FunFam" id="3.40.50.300:FF:000003">
    <property type="entry name" value="Elongation factor Tu"/>
    <property type="match status" value="1"/>
</dbReference>
<dbReference type="Gene3D" id="3.40.50.300">
    <property type="entry name" value="P-loop containing nucleotide triphosphate hydrolases"/>
    <property type="match status" value="1"/>
</dbReference>
<dbReference type="Gene3D" id="2.40.30.10">
    <property type="entry name" value="Translation factors"/>
    <property type="match status" value="2"/>
</dbReference>
<dbReference type="HAMAP" id="MF_00118_B">
    <property type="entry name" value="EF_Tu_B"/>
    <property type="match status" value="1"/>
</dbReference>
<dbReference type="InterPro" id="IPR041709">
    <property type="entry name" value="EF-Tu_GTP-bd"/>
</dbReference>
<dbReference type="InterPro" id="IPR050055">
    <property type="entry name" value="EF-Tu_GTPase"/>
</dbReference>
<dbReference type="InterPro" id="IPR004161">
    <property type="entry name" value="EFTu-like_2"/>
</dbReference>
<dbReference type="InterPro" id="IPR033720">
    <property type="entry name" value="EFTU_2"/>
</dbReference>
<dbReference type="InterPro" id="IPR031157">
    <property type="entry name" value="G_TR_CS"/>
</dbReference>
<dbReference type="InterPro" id="IPR027417">
    <property type="entry name" value="P-loop_NTPase"/>
</dbReference>
<dbReference type="InterPro" id="IPR005225">
    <property type="entry name" value="Small_GTP-bd"/>
</dbReference>
<dbReference type="InterPro" id="IPR000795">
    <property type="entry name" value="T_Tr_GTP-bd_dom"/>
</dbReference>
<dbReference type="InterPro" id="IPR009000">
    <property type="entry name" value="Transl_B-barrel_sf"/>
</dbReference>
<dbReference type="InterPro" id="IPR009001">
    <property type="entry name" value="Transl_elong_EF1A/Init_IF2_C"/>
</dbReference>
<dbReference type="InterPro" id="IPR004541">
    <property type="entry name" value="Transl_elong_EFTu/EF1A_bac/org"/>
</dbReference>
<dbReference type="InterPro" id="IPR004160">
    <property type="entry name" value="Transl_elong_EFTu/EF1A_C"/>
</dbReference>
<dbReference type="NCBIfam" id="TIGR00485">
    <property type="entry name" value="EF-Tu"/>
    <property type="match status" value="1"/>
</dbReference>
<dbReference type="NCBIfam" id="NF000766">
    <property type="entry name" value="PRK00049.1"/>
    <property type="match status" value="1"/>
</dbReference>
<dbReference type="NCBIfam" id="NF009372">
    <property type="entry name" value="PRK12735.1"/>
    <property type="match status" value="1"/>
</dbReference>
<dbReference type="NCBIfam" id="NF009373">
    <property type="entry name" value="PRK12736.1"/>
    <property type="match status" value="1"/>
</dbReference>
<dbReference type="NCBIfam" id="TIGR00231">
    <property type="entry name" value="small_GTP"/>
    <property type="match status" value="1"/>
</dbReference>
<dbReference type="PANTHER" id="PTHR43721:SF22">
    <property type="entry name" value="ELONGATION FACTOR TU, MITOCHONDRIAL"/>
    <property type="match status" value="1"/>
</dbReference>
<dbReference type="PANTHER" id="PTHR43721">
    <property type="entry name" value="ELONGATION FACTOR TU-RELATED"/>
    <property type="match status" value="1"/>
</dbReference>
<dbReference type="Pfam" id="PF00009">
    <property type="entry name" value="GTP_EFTU"/>
    <property type="match status" value="1"/>
</dbReference>
<dbReference type="Pfam" id="PF03144">
    <property type="entry name" value="GTP_EFTU_D2"/>
    <property type="match status" value="1"/>
</dbReference>
<dbReference type="Pfam" id="PF03143">
    <property type="entry name" value="GTP_EFTU_D3"/>
    <property type="match status" value="1"/>
</dbReference>
<dbReference type="PRINTS" id="PR00315">
    <property type="entry name" value="ELONGATNFCT"/>
</dbReference>
<dbReference type="SUPFAM" id="SSF50465">
    <property type="entry name" value="EF-Tu/eEF-1alpha/eIF2-gamma C-terminal domain"/>
    <property type="match status" value="1"/>
</dbReference>
<dbReference type="SUPFAM" id="SSF52540">
    <property type="entry name" value="P-loop containing nucleoside triphosphate hydrolases"/>
    <property type="match status" value="1"/>
</dbReference>
<dbReference type="SUPFAM" id="SSF50447">
    <property type="entry name" value="Translation proteins"/>
    <property type="match status" value="1"/>
</dbReference>
<dbReference type="PROSITE" id="PS00301">
    <property type="entry name" value="G_TR_1"/>
    <property type="match status" value="1"/>
</dbReference>
<dbReference type="PROSITE" id="PS51722">
    <property type="entry name" value="G_TR_2"/>
    <property type="match status" value="1"/>
</dbReference>
<proteinExistence type="inferred from homology"/>
<feature type="chain" id="PRO_1000015747" description="Elongation factor Tu">
    <location>
        <begin position="1"/>
        <end position="396"/>
    </location>
</feature>
<feature type="domain" description="tr-type G">
    <location>
        <begin position="10"/>
        <end position="206"/>
    </location>
</feature>
<feature type="region of interest" description="G1" evidence="1">
    <location>
        <begin position="19"/>
        <end position="26"/>
    </location>
</feature>
<feature type="region of interest" description="G2" evidence="1">
    <location>
        <begin position="60"/>
        <end position="64"/>
    </location>
</feature>
<feature type="region of interest" description="G3" evidence="1">
    <location>
        <begin position="81"/>
        <end position="84"/>
    </location>
</feature>
<feature type="region of interest" description="G4" evidence="1">
    <location>
        <begin position="136"/>
        <end position="139"/>
    </location>
</feature>
<feature type="region of interest" description="G5" evidence="1">
    <location>
        <begin position="174"/>
        <end position="176"/>
    </location>
</feature>
<feature type="binding site" evidence="2">
    <location>
        <begin position="19"/>
        <end position="26"/>
    </location>
    <ligand>
        <name>GTP</name>
        <dbReference type="ChEBI" id="CHEBI:37565"/>
    </ligand>
</feature>
<feature type="binding site" evidence="2">
    <location>
        <position position="26"/>
    </location>
    <ligand>
        <name>Mg(2+)</name>
        <dbReference type="ChEBI" id="CHEBI:18420"/>
    </ligand>
</feature>
<feature type="binding site" evidence="2">
    <location>
        <begin position="81"/>
        <end position="85"/>
    </location>
    <ligand>
        <name>GTP</name>
        <dbReference type="ChEBI" id="CHEBI:37565"/>
    </ligand>
</feature>
<feature type="binding site" evidence="2">
    <location>
        <begin position="136"/>
        <end position="139"/>
    </location>
    <ligand>
        <name>GTP</name>
        <dbReference type="ChEBI" id="CHEBI:37565"/>
    </ligand>
</feature>
<organism>
    <name type="scientific">Rhizorhabdus wittichii (strain DSM 6014 / CCUG 31198 / JCM 15750 / NBRC 105917 / EY 4224 / RW1)</name>
    <name type="common">Sphingomonas wittichii</name>
    <dbReference type="NCBI Taxonomy" id="392499"/>
    <lineage>
        <taxon>Bacteria</taxon>
        <taxon>Pseudomonadati</taxon>
        <taxon>Pseudomonadota</taxon>
        <taxon>Alphaproteobacteria</taxon>
        <taxon>Sphingomonadales</taxon>
        <taxon>Sphingomonadaceae</taxon>
        <taxon>Rhizorhabdus</taxon>
    </lineage>
</organism>
<keyword id="KW-0963">Cytoplasm</keyword>
<keyword id="KW-0251">Elongation factor</keyword>
<keyword id="KW-0342">GTP-binding</keyword>
<keyword id="KW-0378">Hydrolase</keyword>
<keyword id="KW-0460">Magnesium</keyword>
<keyword id="KW-0479">Metal-binding</keyword>
<keyword id="KW-0547">Nucleotide-binding</keyword>
<keyword id="KW-0648">Protein biosynthesis</keyword>
<keyword id="KW-1185">Reference proteome</keyword>
<name>EFTU_RHIWR</name>